<evidence type="ECO:0000255" key="1">
    <source>
        <dbReference type="HAMAP-Rule" id="MF_01310"/>
    </source>
</evidence>
<evidence type="ECO:0000305" key="2"/>
<reference key="1">
    <citation type="journal article" date="1996" name="Science">
        <title>Complete genome sequence of the methanogenic archaeon, Methanococcus jannaschii.</title>
        <authorList>
            <person name="Bult C.J."/>
            <person name="White O."/>
            <person name="Olsen G.J."/>
            <person name="Zhou L."/>
            <person name="Fleischmann R.D."/>
            <person name="Sutton G.G."/>
            <person name="Blake J.A."/>
            <person name="FitzGerald L.M."/>
            <person name="Clayton R.A."/>
            <person name="Gocayne J.D."/>
            <person name="Kerlavage A.R."/>
            <person name="Dougherty B.A."/>
            <person name="Tomb J.-F."/>
            <person name="Adams M.D."/>
            <person name="Reich C.I."/>
            <person name="Overbeek R."/>
            <person name="Kirkness E.F."/>
            <person name="Weinstock K.G."/>
            <person name="Merrick J.M."/>
            <person name="Glodek A."/>
            <person name="Scott J.L."/>
            <person name="Geoghagen N.S.M."/>
            <person name="Weidman J.F."/>
            <person name="Fuhrmann J.L."/>
            <person name="Nguyen D."/>
            <person name="Utterback T.R."/>
            <person name="Kelley J.M."/>
            <person name="Peterson J.D."/>
            <person name="Sadow P.W."/>
            <person name="Hanna M.C."/>
            <person name="Cotton M.D."/>
            <person name="Roberts K.M."/>
            <person name="Hurst M.A."/>
            <person name="Kaine B.P."/>
            <person name="Borodovsky M."/>
            <person name="Klenk H.-P."/>
            <person name="Fraser C.M."/>
            <person name="Smith H.O."/>
            <person name="Woese C.R."/>
            <person name="Venter J.C."/>
        </authorList>
    </citation>
    <scope>NUCLEOTIDE SEQUENCE [LARGE SCALE GENOMIC DNA]</scope>
    <source>
        <strain>ATCC 43067 / DSM 2661 / JAL-1 / JCM 10045 / NBRC 100440</strain>
    </source>
</reference>
<accession>P54021</accession>
<name>RS11_METJA</name>
<comment type="function">
    <text evidence="1">Located on the platform of the 30S subunit.</text>
</comment>
<comment type="subunit">
    <text evidence="1">Part of the 30S ribosomal subunit.</text>
</comment>
<comment type="similarity">
    <text evidence="1">Belongs to the universal ribosomal protein uS11 family.</text>
</comment>
<organism>
    <name type="scientific">Methanocaldococcus jannaschii (strain ATCC 43067 / DSM 2661 / JAL-1 / JCM 10045 / NBRC 100440)</name>
    <name type="common">Methanococcus jannaschii</name>
    <dbReference type="NCBI Taxonomy" id="243232"/>
    <lineage>
        <taxon>Archaea</taxon>
        <taxon>Methanobacteriati</taxon>
        <taxon>Methanobacteriota</taxon>
        <taxon>Methanomada group</taxon>
        <taxon>Methanococci</taxon>
        <taxon>Methanococcales</taxon>
        <taxon>Methanocaldococcaceae</taxon>
        <taxon>Methanocaldococcus</taxon>
    </lineage>
</organism>
<keyword id="KW-1185">Reference proteome</keyword>
<keyword id="KW-0687">Ribonucleoprotein</keyword>
<keyword id="KW-0689">Ribosomal protein</keyword>
<keyword id="KW-0694">RNA-binding</keyword>
<keyword id="KW-0699">rRNA-binding</keyword>
<protein>
    <recommendedName>
        <fullName evidence="1">Small ribosomal subunit protein uS11</fullName>
    </recommendedName>
    <alternativeName>
        <fullName evidence="2">30S ribosomal protein S11</fullName>
    </alternativeName>
</protein>
<gene>
    <name evidence="1" type="primary">rps11</name>
    <name type="ordered locus">MJ0191</name>
</gene>
<dbReference type="EMBL" id="L77117">
    <property type="protein sequence ID" value="AAB98171.1"/>
    <property type="molecule type" value="Genomic_DNA"/>
</dbReference>
<dbReference type="PIR" id="H64323">
    <property type="entry name" value="H64323"/>
</dbReference>
<dbReference type="RefSeq" id="WP_010869686.1">
    <property type="nucleotide sequence ID" value="NC_000909.1"/>
</dbReference>
<dbReference type="SMR" id="P54021"/>
<dbReference type="FunCoup" id="P54021">
    <property type="interactions" value="172"/>
</dbReference>
<dbReference type="STRING" id="243232.MJ_0191"/>
<dbReference type="PaxDb" id="243232-MJ_0191"/>
<dbReference type="EnsemblBacteria" id="AAB98171">
    <property type="protein sequence ID" value="AAB98171"/>
    <property type="gene ID" value="MJ_0191"/>
</dbReference>
<dbReference type="GeneID" id="1451039"/>
<dbReference type="KEGG" id="mja:MJ_0191"/>
<dbReference type="eggNOG" id="arCOG04240">
    <property type="taxonomic scope" value="Archaea"/>
</dbReference>
<dbReference type="HOGENOM" id="CLU_072439_6_1_2"/>
<dbReference type="InParanoid" id="P54021"/>
<dbReference type="OrthoDB" id="12054at2157"/>
<dbReference type="PhylomeDB" id="P54021"/>
<dbReference type="Proteomes" id="UP000000805">
    <property type="component" value="Chromosome"/>
</dbReference>
<dbReference type="GO" id="GO:0022627">
    <property type="term" value="C:cytosolic small ribosomal subunit"/>
    <property type="evidence" value="ECO:0000318"/>
    <property type="project" value="GO_Central"/>
</dbReference>
<dbReference type="GO" id="GO:0019843">
    <property type="term" value="F:rRNA binding"/>
    <property type="evidence" value="ECO:0007669"/>
    <property type="project" value="UniProtKB-UniRule"/>
</dbReference>
<dbReference type="GO" id="GO:0003735">
    <property type="term" value="F:structural constituent of ribosome"/>
    <property type="evidence" value="ECO:0000318"/>
    <property type="project" value="GO_Central"/>
</dbReference>
<dbReference type="GO" id="GO:0006412">
    <property type="term" value="P:translation"/>
    <property type="evidence" value="ECO:0000318"/>
    <property type="project" value="GO_Central"/>
</dbReference>
<dbReference type="FunFam" id="3.30.420.80:FF:000007">
    <property type="entry name" value="30S ribosomal protein S11"/>
    <property type="match status" value="1"/>
</dbReference>
<dbReference type="Gene3D" id="3.30.420.80">
    <property type="entry name" value="Ribosomal protein S11"/>
    <property type="match status" value="1"/>
</dbReference>
<dbReference type="HAMAP" id="MF_01310">
    <property type="entry name" value="Ribosomal_uS11"/>
    <property type="match status" value="1"/>
</dbReference>
<dbReference type="InterPro" id="IPR001971">
    <property type="entry name" value="Ribosomal_uS11"/>
</dbReference>
<dbReference type="InterPro" id="IPR019961">
    <property type="entry name" value="Ribosomal_uS11_archaeal"/>
</dbReference>
<dbReference type="InterPro" id="IPR018102">
    <property type="entry name" value="Ribosomal_uS11_CS"/>
</dbReference>
<dbReference type="InterPro" id="IPR036967">
    <property type="entry name" value="Ribosomal_uS11_sf"/>
</dbReference>
<dbReference type="NCBIfam" id="TIGR03628">
    <property type="entry name" value="arch_S11P"/>
    <property type="match status" value="1"/>
</dbReference>
<dbReference type="NCBIfam" id="NF007176">
    <property type="entry name" value="PRK09607.1"/>
    <property type="match status" value="1"/>
</dbReference>
<dbReference type="PANTHER" id="PTHR11759">
    <property type="entry name" value="40S RIBOSOMAL PROTEIN S14/30S RIBOSOMAL PROTEIN S11"/>
    <property type="match status" value="1"/>
</dbReference>
<dbReference type="Pfam" id="PF00411">
    <property type="entry name" value="Ribosomal_S11"/>
    <property type="match status" value="1"/>
</dbReference>
<dbReference type="PIRSF" id="PIRSF002131">
    <property type="entry name" value="Ribosomal_S11"/>
    <property type="match status" value="1"/>
</dbReference>
<dbReference type="SUPFAM" id="SSF53137">
    <property type="entry name" value="Translational machinery components"/>
    <property type="match status" value="1"/>
</dbReference>
<dbReference type="PROSITE" id="PS00054">
    <property type="entry name" value="RIBOSOMAL_S11"/>
    <property type="match status" value="1"/>
</dbReference>
<sequence>MAEQKKEKWGIVHIYSSYNNTIIHATDITGAETIARVSGGRVTRNQRDEGSPYAAMQAAFKLAEVLKERGIENIHIKVRAPGGSGQKNPGPGAQAAIRALARAGLRIGRIEDVTPVPHDGTTPKKRFKK</sequence>
<feature type="chain" id="PRO_0000123271" description="Small ribosomal subunit protein uS11">
    <location>
        <begin position="1"/>
        <end position="129"/>
    </location>
</feature>
<proteinExistence type="inferred from homology"/>